<evidence type="ECO:0000250" key="1">
    <source>
        <dbReference type="UniProtKB" id="Q14157"/>
    </source>
</evidence>
<evidence type="ECO:0000250" key="2">
    <source>
        <dbReference type="UniProtKB" id="Q86S05"/>
    </source>
</evidence>
<evidence type="ECO:0000256" key="3">
    <source>
        <dbReference type="SAM" id="MobiDB-lite"/>
    </source>
</evidence>
<evidence type="ECO:0000269" key="4">
    <source>
    </source>
</evidence>
<evidence type="ECO:0000269" key="5">
    <source>
    </source>
</evidence>
<evidence type="ECO:0000303" key="6">
    <source>
    </source>
</evidence>
<evidence type="ECO:0000305" key="7"/>
<evidence type="ECO:0000305" key="8">
    <source>
    </source>
</evidence>
<evidence type="ECO:0000312" key="9">
    <source>
        <dbReference type="Proteomes" id="UP000001940"/>
    </source>
</evidence>
<evidence type="ECO:0000312" key="10">
    <source>
        <dbReference type="WormBase" id="R119.4"/>
    </source>
</evidence>
<comment type="function">
    <text evidence="4 5">Antagonises the activities of multiple heterochronic microRNAs such as lin-4 and let-7 miRNAs (PubMed:34807903). Modulates gene expression and cell fate specification during development (PubMed:34807903). Plays a role in, but not strictly required for, the formation of stress granules (PubMed:34661238). May be involved in protein translation and reducing the expression of mature microRNAs (PubMed:34807903).</text>
</comment>
<comment type="subcellular location">
    <subcellularLocation>
        <location evidence="4 5">Cytoplasm</location>
        <location evidence="4 5">Stress granule</location>
    </subcellularLocation>
</comment>
<comment type="disruption phenotype">
    <text evidence="4 5">Fewer progeny and embryonic lethality (PubMed:34807903). Fewer stress granules containing gtbp-1 form in embryos exposed to heat shock (PubMed:34661238). Weak, abnormally early expression of adult-specific cuticle collagen col-19 in hypodermal cells in 17% of late larval stage 4 worms but does not induce early alae formation at L4 molt (PubMed:34807903). Suppress heterochronic phenotypes in a lin-4 mutant background (PubMed:34807903). RNAi-mediated knockdown leads to fewer progeny and 50% lethality (PubMed:34661238). Reduction of gtbp-1 levels in the germline (PubMed:34661238). In response to heat shock, gtbp-1-containing stress granules do not form in oocytes but are still observed around the nuclei of the syncytial germline (PubMed:34661238). Does not abolish tiar-1 granule formation after heat-stress (PubMed:34661238). Suppresses heterochronic phenotypes and increases mature miRNA species for several miRNAs in an Argonaute-like alg-1 mutant background (PubMed:34807903).</text>
</comment>
<comment type="similarity">
    <text evidence="7">Belongs to the Ubiquitin-associated-like family.</text>
</comment>
<gene>
    <name evidence="10" type="primary">pqn-59</name>
    <name evidence="10" type="ORF">R119.4</name>
</gene>
<accession>O61708</accession>
<keyword id="KW-0963">Cytoplasm</keyword>
<keyword id="KW-0597">Phosphoprotein</keyword>
<keyword id="KW-1185">Reference proteome</keyword>
<protein>
    <recommendedName>
        <fullName evidence="8 10">Prion-like (glutamine/asparagine-rich) domain bearing protein pqn-59</fullName>
    </recommendedName>
    <alternativeName>
        <fullName evidence="2">Protein lingerer homolog</fullName>
    </alternativeName>
    <alternativeName>
        <fullName evidence="1 6">Ubiquitin-associated protein 2-like</fullName>
    </alternativeName>
</protein>
<proteinExistence type="inferred from homology"/>
<dbReference type="EMBL" id="BX284601">
    <property type="protein sequence ID" value="CCD73343.1"/>
    <property type="molecule type" value="Genomic_DNA"/>
</dbReference>
<dbReference type="RefSeq" id="NP_490727.1">
    <property type="nucleotide sequence ID" value="NM_058326.8"/>
</dbReference>
<dbReference type="SMR" id="O61708"/>
<dbReference type="DIP" id="DIP-25020N"/>
<dbReference type="FunCoup" id="O61708">
    <property type="interactions" value="883"/>
</dbReference>
<dbReference type="IntAct" id="O61708">
    <property type="interactions" value="9"/>
</dbReference>
<dbReference type="STRING" id="6239.R119.4.1"/>
<dbReference type="PaxDb" id="6239-R119.4"/>
<dbReference type="PeptideAtlas" id="O61708"/>
<dbReference type="ABCD" id="O61708">
    <property type="antibodies" value="3 sequenced antibodies"/>
</dbReference>
<dbReference type="EnsemblMetazoa" id="R119.4.1">
    <property type="protein sequence ID" value="R119.4.1"/>
    <property type="gene ID" value="WBGene00004143"/>
</dbReference>
<dbReference type="GeneID" id="266819"/>
<dbReference type="KEGG" id="cel:CELE_R119.4"/>
<dbReference type="UCSC" id="R119.4">
    <property type="organism name" value="c. elegans"/>
</dbReference>
<dbReference type="AGR" id="WB:WBGene00004143"/>
<dbReference type="CTD" id="266819"/>
<dbReference type="WormBase" id="R119.4">
    <property type="protein sequence ID" value="CE23925"/>
    <property type="gene ID" value="WBGene00004143"/>
    <property type="gene designation" value="pqn-59"/>
</dbReference>
<dbReference type="eggNOG" id="ENOG502TBWK">
    <property type="taxonomic scope" value="Eukaryota"/>
</dbReference>
<dbReference type="GeneTree" id="ENSGT00390000003453"/>
<dbReference type="HOGENOM" id="CLU_341724_0_0_1"/>
<dbReference type="InParanoid" id="O61708"/>
<dbReference type="OMA" id="GQFDMNS"/>
<dbReference type="OrthoDB" id="5918007at2759"/>
<dbReference type="Proteomes" id="UP000001940">
    <property type="component" value="Chromosome I"/>
</dbReference>
<dbReference type="Bgee" id="WBGene00004143">
    <property type="expression patterns" value="Expressed in embryo and 4 other cell types or tissues"/>
</dbReference>
<dbReference type="GO" id="GO:0005737">
    <property type="term" value="C:cytoplasm"/>
    <property type="evidence" value="ECO:0000318"/>
    <property type="project" value="GO_Central"/>
</dbReference>
<dbReference type="GO" id="GO:0010494">
    <property type="term" value="C:cytoplasmic stress granule"/>
    <property type="evidence" value="ECO:0007669"/>
    <property type="project" value="UniProtKB-SubCell"/>
</dbReference>
<dbReference type="GO" id="GO:0005634">
    <property type="term" value="C:nucleus"/>
    <property type="evidence" value="ECO:0000318"/>
    <property type="project" value="GO_Central"/>
</dbReference>
<dbReference type="CDD" id="cd14277">
    <property type="entry name" value="UBA_UBP2_like"/>
    <property type="match status" value="1"/>
</dbReference>
<dbReference type="Gene3D" id="1.10.8.10">
    <property type="entry name" value="DNA helicase RuvA subunit, C-terminal domain"/>
    <property type="match status" value="1"/>
</dbReference>
<dbReference type="InterPro" id="IPR051833">
    <property type="entry name" value="TC-DDR_regulator"/>
</dbReference>
<dbReference type="InterPro" id="IPR009060">
    <property type="entry name" value="UBA-like_sf"/>
</dbReference>
<dbReference type="PANTHER" id="PTHR16308:SF13">
    <property type="entry name" value="PROTEIN LINGERER"/>
    <property type="match status" value="1"/>
</dbReference>
<dbReference type="PANTHER" id="PTHR16308">
    <property type="entry name" value="UBIQUITIN ASSOCIATED PROTEIN 2-LIKE/LINGERER"/>
    <property type="match status" value="1"/>
</dbReference>
<dbReference type="SUPFAM" id="SSF46934">
    <property type="entry name" value="UBA-like"/>
    <property type="match status" value="1"/>
</dbReference>
<name>PQN59_CAEEL</name>
<reference evidence="9" key="1">
    <citation type="journal article" date="1998" name="Science">
        <title>Genome sequence of the nematode C. elegans: a platform for investigating biology.</title>
        <authorList>
            <consortium name="The C. elegans sequencing consortium"/>
        </authorList>
    </citation>
    <scope>NUCLEOTIDE SEQUENCE [LARGE SCALE GENOMIC DNA]</scope>
    <source>
        <strain evidence="9">Bristol N2</strain>
    </source>
</reference>
<reference evidence="7" key="2">
    <citation type="journal article" date="2021" name="J. Cell Sci.">
        <title>PQN-59 and GTBP-1 contribute to stress granule formation but are not essential for their assembly in C. elegans embryos.</title>
        <authorList>
            <person name="Abbatemarco S."/>
            <person name="Bondaz A."/>
            <person name="Schwager F."/>
            <person name="Wang J."/>
            <person name="Hammell C.M."/>
            <person name="Gotta M."/>
        </authorList>
    </citation>
    <scope>FUNCTION</scope>
    <scope>SUBCELLULAR LOCATION</scope>
    <scope>DISRUPTION PHENOTYPE</scope>
    <scope>SIMILARITY WITH UBIQUITIN-ASSOCIATED PROTEIN 2-LIKE</scope>
</reference>
<reference evidence="7" key="3">
    <citation type="journal article" date="2021" name="PLoS Genet.">
        <title>PQN-59 antagonizes microRNA-mediated repression during post-embryonic temporal patterning and modulates translation and stress granule formation in C. elegans.</title>
        <authorList>
            <person name="Carlston C."/>
            <person name="Weinmann R."/>
            <person name="Stec N."/>
            <person name="Abbatemarco S."/>
            <person name="Schwager F."/>
            <person name="Wang J."/>
            <person name="Ouyang H."/>
            <person name="Ewald C.Y."/>
            <person name="Gotta M."/>
            <person name="Hammell C.M."/>
        </authorList>
    </citation>
    <scope>FUNCTION</scope>
    <scope>SUBCELLULAR LOCATION</scope>
    <scope>DISRUPTION PHENOTYPE</scope>
    <scope>SIMILARITY WITH UBIQUITIN-ASSOCIATED PROTEIN 2-LIKE</scope>
</reference>
<organism evidence="9">
    <name type="scientific">Caenorhabditis elegans</name>
    <dbReference type="NCBI Taxonomy" id="6239"/>
    <lineage>
        <taxon>Eukaryota</taxon>
        <taxon>Metazoa</taxon>
        <taxon>Ecdysozoa</taxon>
        <taxon>Nematoda</taxon>
        <taxon>Chromadorea</taxon>
        <taxon>Rhabditida</taxon>
        <taxon>Rhabditina</taxon>
        <taxon>Rhabditomorpha</taxon>
        <taxon>Rhabditoidea</taxon>
        <taxon>Rhabditidae</taxon>
        <taxon>Peloderinae</taxon>
        <taxon>Caenorhabditis</taxon>
    </lineage>
</organism>
<sequence>MGIKGDKKATSDQARLARLTLEGNSGNEEDIQFMIKTIIETTGCTQAQAEIALLDTDNNLYGAIDHILDAGDKLDSWTEQKGAKKEKKKPEEGSYNNRGFVARGRGGGTGFVDRGGRGRSNGAPRESRDNNRDNRDNKEGAAPRSTRGGFEKPYVGRGGRGGARGGYSRAVAPSSALEPDAFTADLDENQTKVDTTVTEVQPPVEESVTATVPTSSAPAPISFAAVAAAAHRKEALRKHQAQNPQPAAPPRRSLSPQPPLPSVAPVKEEPAAAPVFFEPETSHQPEKEDGFFQNESSVLAEEQTPNVSTHHDENVQSTPEPNQAWTTQLKTDLGIGLSEAPGLGLSPIPSAAPVQIIPDPGVEFVGTTAPTNIHDYSFGFVEAAPSPQLPSTESSAASISNASENIFNSSRIMPKQVEPERTSIPNGDYNLKSTSPPLSYGQSNRGLSYDTSSASYQPTDRMAPNKFNNSGPLPTQQSAQQHQPQQQQQQAPQQPVQQQQQTPPAQSQPTGHPQQHPHMMFTQQLPYAPYMNNYMNMYNPMPGVRDEQYTAALMQYGMGVDLTSLLPTAPLSQAASAQQVQSGQQRETHGLMDFNKFGSQSSRDQQPQQASNVGPPPGFQATNYMQQPNLSSLFMQQYSPAPHQFTPFMNMMPNVGSSAGGRQLYGQDDERKSYDKMSGSKPAAQQNQHSQYQHNGGNLGKYGMNKPYNWSN</sequence>
<feature type="chain" id="PRO_0000460614" description="Prion-like (glutamine/asparagine-rich) domain bearing protein pqn-59">
    <location>
        <begin position="1"/>
        <end position="712"/>
    </location>
</feature>
<feature type="region of interest" description="Disordered" evidence="3">
    <location>
        <begin position="79"/>
        <end position="172"/>
    </location>
</feature>
<feature type="region of interest" description="Disordered" evidence="3">
    <location>
        <begin position="198"/>
        <end position="217"/>
    </location>
</feature>
<feature type="region of interest" description="Disordered" evidence="3">
    <location>
        <begin position="228"/>
        <end position="265"/>
    </location>
</feature>
<feature type="region of interest" description="Disordered" evidence="3">
    <location>
        <begin position="410"/>
        <end position="517"/>
    </location>
</feature>
<feature type="region of interest" description="Disordered" evidence="3">
    <location>
        <begin position="594"/>
        <end position="624"/>
    </location>
</feature>
<feature type="region of interest" description="Disordered" evidence="3">
    <location>
        <begin position="659"/>
        <end position="712"/>
    </location>
</feature>
<feature type="compositionally biased region" description="Basic and acidic residues" evidence="3">
    <location>
        <begin position="79"/>
        <end position="92"/>
    </location>
</feature>
<feature type="compositionally biased region" description="Basic and acidic residues" evidence="3">
    <location>
        <begin position="125"/>
        <end position="141"/>
    </location>
</feature>
<feature type="compositionally biased region" description="Gly residues" evidence="3">
    <location>
        <begin position="156"/>
        <end position="165"/>
    </location>
</feature>
<feature type="compositionally biased region" description="Low complexity" evidence="3">
    <location>
        <begin position="241"/>
        <end position="255"/>
    </location>
</feature>
<feature type="compositionally biased region" description="Polar residues" evidence="3">
    <location>
        <begin position="431"/>
        <end position="458"/>
    </location>
</feature>
<feature type="compositionally biased region" description="Low complexity" evidence="3">
    <location>
        <begin position="474"/>
        <end position="510"/>
    </location>
</feature>
<feature type="compositionally biased region" description="Polar residues" evidence="3">
    <location>
        <begin position="597"/>
        <end position="612"/>
    </location>
</feature>
<feature type="compositionally biased region" description="Polar residues" evidence="3">
    <location>
        <begin position="683"/>
        <end position="696"/>
    </location>
</feature>